<feature type="chain" id="PRO_0000293020" description="Pyridoxal 5'-phosphate synthase subunit PdxT">
    <location>
        <begin position="1"/>
        <end position="186"/>
    </location>
</feature>
<feature type="active site" description="Nucleophile" evidence="1">
    <location>
        <position position="79"/>
    </location>
</feature>
<feature type="active site" description="Charge relay system" evidence="1">
    <location>
        <position position="170"/>
    </location>
</feature>
<feature type="active site" description="Charge relay system" evidence="1">
    <location>
        <position position="172"/>
    </location>
</feature>
<feature type="binding site" evidence="1">
    <location>
        <begin position="47"/>
        <end position="49"/>
    </location>
    <ligand>
        <name>L-glutamine</name>
        <dbReference type="ChEBI" id="CHEBI:58359"/>
    </ligand>
</feature>
<feature type="binding site" evidence="1">
    <location>
        <position position="106"/>
    </location>
    <ligand>
        <name>L-glutamine</name>
        <dbReference type="ChEBI" id="CHEBI:58359"/>
    </ligand>
</feature>
<feature type="binding site" evidence="1">
    <location>
        <begin position="134"/>
        <end position="135"/>
    </location>
    <ligand>
        <name>L-glutamine</name>
        <dbReference type="ChEBI" id="CHEBI:58359"/>
    </ligand>
</feature>
<protein>
    <recommendedName>
        <fullName evidence="1">Pyridoxal 5'-phosphate synthase subunit PdxT</fullName>
        <ecNumber evidence="1">4.3.3.6</ecNumber>
    </recommendedName>
    <alternativeName>
        <fullName evidence="1">Pdx2</fullName>
    </alternativeName>
    <alternativeName>
        <fullName evidence="1">Pyridoxal 5'-phosphate synthase glutaminase subunit</fullName>
        <ecNumber evidence="1">3.5.1.2</ecNumber>
    </alternativeName>
</protein>
<name>PDXT_METTP</name>
<gene>
    <name evidence="1" type="primary">pdxT</name>
    <name type="ordered locus">Mthe_0920</name>
</gene>
<reference key="1">
    <citation type="submission" date="2006-10" db="EMBL/GenBank/DDBJ databases">
        <title>Complete sequence of Methanosaeta thermophila PT.</title>
        <authorList>
            <consortium name="US DOE Joint Genome Institute"/>
            <person name="Copeland A."/>
            <person name="Lucas S."/>
            <person name="Lapidus A."/>
            <person name="Barry K."/>
            <person name="Detter J.C."/>
            <person name="Glavina del Rio T."/>
            <person name="Hammon N."/>
            <person name="Israni S."/>
            <person name="Pitluck S."/>
            <person name="Chain P."/>
            <person name="Malfatti S."/>
            <person name="Shin M."/>
            <person name="Vergez L."/>
            <person name="Schmutz J."/>
            <person name="Larimer F."/>
            <person name="Land M."/>
            <person name="Hauser L."/>
            <person name="Kyrpides N."/>
            <person name="Kim E."/>
            <person name="Smith K.S."/>
            <person name="Ingram-Smith C."/>
            <person name="Richardson P."/>
        </authorList>
    </citation>
    <scope>NUCLEOTIDE SEQUENCE [LARGE SCALE GENOMIC DNA]</scope>
    <source>
        <strain>DSM 6194 / JCM 14653 / NBRC 101360 / PT</strain>
    </source>
</reference>
<dbReference type="EC" id="4.3.3.6" evidence="1"/>
<dbReference type="EC" id="3.5.1.2" evidence="1"/>
<dbReference type="EMBL" id="CP000477">
    <property type="protein sequence ID" value="ABK14708.1"/>
    <property type="molecule type" value="Genomic_DNA"/>
</dbReference>
<dbReference type="RefSeq" id="WP_011696103.1">
    <property type="nucleotide sequence ID" value="NC_008553.1"/>
</dbReference>
<dbReference type="SMR" id="A0B7N4"/>
<dbReference type="STRING" id="349307.Mthe_0920"/>
<dbReference type="GeneID" id="4462384"/>
<dbReference type="KEGG" id="mtp:Mthe_0920"/>
<dbReference type="HOGENOM" id="CLU_069674_2_0_2"/>
<dbReference type="OrthoDB" id="26717at2157"/>
<dbReference type="UniPathway" id="UPA00245"/>
<dbReference type="Proteomes" id="UP000000674">
    <property type="component" value="Chromosome"/>
</dbReference>
<dbReference type="GO" id="GO:0005829">
    <property type="term" value="C:cytosol"/>
    <property type="evidence" value="ECO:0007669"/>
    <property type="project" value="TreeGrafter"/>
</dbReference>
<dbReference type="GO" id="GO:1903600">
    <property type="term" value="C:glutaminase complex"/>
    <property type="evidence" value="ECO:0007669"/>
    <property type="project" value="TreeGrafter"/>
</dbReference>
<dbReference type="GO" id="GO:0004359">
    <property type="term" value="F:glutaminase activity"/>
    <property type="evidence" value="ECO:0007669"/>
    <property type="project" value="UniProtKB-UniRule"/>
</dbReference>
<dbReference type="GO" id="GO:0036381">
    <property type="term" value="F:pyridoxal 5'-phosphate synthase (glutamine hydrolysing) activity"/>
    <property type="evidence" value="ECO:0007669"/>
    <property type="project" value="UniProtKB-UniRule"/>
</dbReference>
<dbReference type="GO" id="GO:0006543">
    <property type="term" value="P:glutamine catabolic process"/>
    <property type="evidence" value="ECO:0007669"/>
    <property type="project" value="UniProtKB-UniRule"/>
</dbReference>
<dbReference type="GO" id="GO:0042823">
    <property type="term" value="P:pyridoxal phosphate biosynthetic process"/>
    <property type="evidence" value="ECO:0007669"/>
    <property type="project" value="UniProtKB-UniRule"/>
</dbReference>
<dbReference type="GO" id="GO:0008614">
    <property type="term" value="P:pyridoxine metabolic process"/>
    <property type="evidence" value="ECO:0007669"/>
    <property type="project" value="TreeGrafter"/>
</dbReference>
<dbReference type="CDD" id="cd01749">
    <property type="entry name" value="GATase1_PB"/>
    <property type="match status" value="1"/>
</dbReference>
<dbReference type="FunFam" id="3.40.50.880:FF:000010">
    <property type="entry name" value="uncharacterized protein LOC100176842 isoform X2"/>
    <property type="match status" value="1"/>
</dbReference>
<dbReference type="Gene3D" id="3.40.50.880">
    <property type="match status" value="1"/>
</dbReference>
<dbReference type="HAMAP" id="MF_01615">
    <property type="entry name" value="PdxT"/>
    <property type="match status" value="1"/>
</dbReference>
<dbReference type="InterPro" id="IPR029062">
    <property type="entry name" value="Class_I_gatase-like"/>
</dbReference>
<dbReference type="InterPro" id="IPR002161">
    <property type="entry name" value="PdxT/SNO"/>
</dbReference>
<dbReference type="InterPro" id="IPR021196">
    <property type="entry name" value="PdxT/SNO_CS"/>
</dbReference>
<dbReference type="NCBIfam" id="TIGR03800">
    <property type="entry name" value="PLP_synth_Pdx2"/>
    <property type="match status" value="1"/>
</dbReference>
<dbReference type="PANTHER" id="PTHR31559">
    <property type="entry name" value="PYRIDOXAL 5'-PHOSPHATE SYNTHASE SUBUNIT SNO"/>
    <property type="match status" value="1"/>
</dbReference>
<dbReference type="PANTHER" id="PTHR31559:SF0">
    <property type="entry name" value="PYRIDOXAL 5'-PHOSPHATE SYNTHASE SUBUNIT SNO1-RELATED"/>
    <property type="match status" value="1"/>
</dbReference>
<dbReference type="Pfam" id="PF01174">
    <property type="entry name" value="SNO"/>
    <property type="match status" value="1"/>
</dbReference>
<dbReference type="PIRSF" id="PIRSF005639">
    <property type="entry name" value="Glut_amidoT_SNO"/>
    <property type="match status" value="1"/>
</dbReference>
<dbReference type="SUPFAM" id="SSF52317">
    <property type="entry name" value="Class I glutamine amidotransferase-like"/>
    <property type="match status" value="1"/>
</dbReference>
<dbReference type="PROSITE" id="PS01236">
    <property type="entry name" value="PDXT_SNO_1"/>
    <property type="match status" value="1"/>
</dbReference>
<dbReference type="PROSITE" id="PS51130">
    <property type="entry name" value="PDXT_SNO_2"/>
    <property type="match status" value="1"/>
</dbReference>
<evidence type="ECO:0000255" key="1">
    <source>
        <dbReference type="HAMAP-Rule" id="MF_01615"/>
    </source>
</evidence>
<accession>A0B7N4</accession>
<sequence length="186" mass="19562">MRRIGVIALQGDVSEHISAIEAAGGQAVPVRRAGIIPTCSGIVIPGGESTTISRQLERTGIAAEIKQAAANGTPVLATCAGLVLAAKEIDAGDVKPLGLIDISVGRNAFGPQRESFEAEINVEGFDRPYRAVFIRAPVVLRCGEGVEKLARFGGRTVAVRQGNVIGLAFHPELTGDLRFHKMLLEA</sequence>
<organism>
    <name type="scientific">Methanothrix thermoacetophila (strain DSM 6194 / JCM 14653 / NBRC 101360 / PT)</name>
    <name type="common">Methanosaeta thermophila</name>
    <dbReference type="NCBI Taxonomy" id="349307"/>
    <lineage>
        <taxon>Archaea</taxon>
        <taxon>Methanobacteriati</taxon>
        <taxon>Methanobacteriota</taxon>
        <taxon>Stenosarchaea group</taxon>
        <taxon>Methanomicrobia</taxon>
        <taxon>Methanotrichales</taxon>
        <taxon>Methanotrichaceae</taxon>
        <taxon>Methanothrix</taxon>
    </lineage>
</organism>
<proteinExistence type="inferred from homology"/>
<keyword id="KW-0315">Glutamine amidotransferase</keyword>
<keyword id="KW-0378">Hydrolase</keyword>
<keyword id="KW-0456">Lyase</keyword>
<keyword id="KW-0663">Pyridoxal phosphate</keyword>
<keyword id="KW-1185">Reference proteome</keyword>
<comment type="function">
    <text evidence="1">Catalyzes the hydrolysis of glutamine to glutamate and ammonia as part of the biosynthesis of pyridoxal 5'-phosphate. The resulting ammonia molecule is channeled to the active site of PdxS.</text>
</comment>
<comment type="catalytic activity">
    <reaction evidence="1">
        <text>aldehydo-D-ribose 5-phosphate + D-glyceraldehyde 3-phosphate + L-glutamine = pyridoxal 5'-phosphate + L-glutamate + phosphate + 3 H2O + H(+)</text>
        <dbReference type="Rhea" id="RHEA:31507"/>
        <dbReference type="ChEBI" id="CHEBI:15377"/>
        <dbReference type="ChEBI" id="CHEBI:15378"/>
        <dbReference type="ChEBI" id="CHEBI:29985"/>
        <dbReference type="ChEBI" id="CHEBI:43474"/>
        <dbReference type="ChEBI" id="CHEBI:58273"/>
        <dbReference type="ChEBI" id="CHEBI:58359"/>
        <dbReference type="ChEBI" id="CHEBI:59776"/>
        <dbReference type="ChEBI" id="CHEBI:597326"/>
        <dbReference type="EC" id="4.3.3.6"/>
    </reaction>
</comment>
<comment type="catalytic activity">
    <reaction evidence="1">
        <text>L-glutamine + H2O = L-glutamate + NH4(+)</text>
        <dbReference type="Rhea" id="RHEA:15889"/>
        <dbReference type="ChEBI" id="CHEBI:15377"/>
        <dbReference type="ChEBI" id="CHEBI:28938"/>
        <dbReference type="ChEBI" id="CHEBI:29985"/>
        <dbReference type="ChEBI" id="CHEBI:58359"/>
        <dbReference type="EC" id="3.5.1.2"/>
    </reaction>
</comment>
<comment type="pathway">
    <text evidence="1">Cofactor biosynthesis; pyridoxal 5'-phosphate biosynthesis.</text>
</comment>
<comment type="subunit">
    <text evidence="1">In the presence of PdxS, forms a dodecamer of heterodimers. Only shows activity in the heterodimer.</text>
</comment>
<comment type="similarity">
    <text evidence="1">Belongs to the glutaminase PdxT/SNO family.</text>
</comment>